<protein>
    <recommendedName>
        <fullName evidence="1">S-adenosylmethionine synthase</fullName>
        <shortName evidence="1">AdoMet synthase</shortName>
        <ecNumber evidence="1">2.5.1.6</ecNumber>
    </recommendedName>
    <alternativeName>
        <fullName evidence="1">MAT</fullName>
    </alternativeName>
    <alternativeName>
        <fullName evidence="1">Methionine adenosyltransferase</fullName>
    </alternativeName>
</protein>
<organism>
    <name type="scientific">Streptococcus pyogenes serotype M12 (strain MGAS9429)</name>
    <dbReference type="NCBI Taxonomy" id="370551"/>
    <lineage>
        <taxon>Bacteria</taxon>
        <taxon>Bacillati</taxon>
        <taxon>Bacillota</taxon>
        <taxon>Bacilli</taxon>
        <taxon>Lactobacillales</taxon>
        <taxon>Streptococcaceae</taxon>
        <taxon>Streptococcus</taxon>
    </lineage>
</organism>
<dbReference type="EC" id="2.5.1.6" evidence="1"/>
<dbReference type="EMBL" id="CP000259">
    <property type="protein sequence ID" value="ABF32339.1"/>
    <property type="molecule type" value="Genomic_DNA"/>
</dbReference>
<dbReference type="RefSeq" id="WP_002989292.1">
    <property type="nucleotide sequence ID" value="NC_008021.1"/>
</dbReference>
<dbReference type="SMR" id="Q1JL80"/>
<dbReference type="GeneID" id="69900671"/>
<dbReference type="KEGG" id="spk:MGAS9429_Spy1152"/>
<dbReference type="HOGENOM" id="CLU_041802_1_1_9"/>
<dbReference type="UniPathway" id="UPA00315">
    <property type="reaction ID" value="UER00080"/>
</dbReference>
<dbReference type="Proteomes" id="UP000002433">
    <property type="component" value="Chromosome"/>
</dbReference>
<dbReference type="GO" id="GO:0005737">
    <property type="term" value="C:cytoplasm"/>
    <property type="evidence" value="ECO:0007669"/>
    <property type="project" value="UniProtKB-SubCell"/>
</dbReference>
<dbReference type="GO" id="GO:0005524">
    <property type="term" value="F:ATP binding"/>
    <property type="evidence" value="ECO:0007669"/>
    <property type="project" value="UniProtKB-UniRule"/>
</dbReference>
<dbReference type="GO" id="GO:0000287">
    <property type="term" value="F:magnesium ion binding"/>
    <property type="evidence" value="ECO:0007669"/>
    <property type="project" value="UniProtKB-UniRule"/>
</dbReference>
<dbReference type="GO" id="GO:0004478">
    <property type="term" value="F:methionine adenosyltransferase activity"/>
    <property type="evidence" value="ECO:0007669"/>
    <property type="project" value="UniProtKB-UniRule"/>
</dbReference>
<dbReference type="GO" id="GO:0006730">
    <property type="term" value="P:one-carbon metabolic process"/>
    <property type="evidence" value="ECO:0007669"/>
    <property type="project" value="UniProtKB-KW"/>
</dbReference>
<dbReference type="GO" id="GO:0006556">
    <property type="term" value="P:S-adenosylmethionine biosynthetic process"/>
    <property type="evidence" value="ECO:0007669"/>
    <property type="project" value="UniProtKB-UniRule"/>
</dbReference>
<dbReference type="CDD" id="cd18079">
    <property type="entry name" value="S-AdoMet_synt"/>
    <property type="match status" value="1"/>
</dbReference>
<dbReference type="FunFam" id="3.30.300.10:FF:000003">
    <property type="entry name" value="S-adenosylmethionine synthase"/>
    <property type="match status" value="1"/>
</dbReference>
<dbReference type="Gene3D" id="3.30.300.10">
    <property type="match status" value="3"/>
</dbReference>
<dbReference type="HAMAP" id="MF_00086">
    <property type="entry name" value="S_AdoMet_synth1"/>
    <property type="match status" value="1"/>
</dbReference>
<dbReference type="InterPro" id="IPR022631">
    <property type="entry name" value="ADOMET_SYNTHASE_CS"/>
</dbReference>
<dbReference type="InterPro" id="IPR022630">
    <property type="entry name" value="S-AdoMet_synt_C"/>
</dbReference>
<dbReference type="InterPro" id="IPR022629">
    <property type="entry name" value="S-AdoMet_synt_central"/>
</dbReference>
<dbReference type="InterPro" id="IPR022628">
    <property type="entry name" value="S-AdoMet_synt_N"/>
</dbReference>
<dbReference type="InterPro" id="IPR002133">
    <property type="entry name" value="S-AdoMet_synthetase"/>
</dbReference>
<dbReference type="InterPro" id="IPR022636">
    <property type="entry name" value="S-AdoMet_synthetase_sfam"/>
</dbReference>
<dbReference type="NCBIfam" id="TIGR01034">
    <property type="entry name" value="metK"/>
    <property type="match status" value="1"/>
</dbReference>
<dbReference type="PANTHER" id="PTHR11964">
    <property type="entry name" value="S-ADENOSYLMETHIONINE SYNTHETASE"/>
    <property type="match status" value="1"/>
</dbReference>
<dbReference type="Pfam" id="PF02773">
    <property type="entry name" value="S-AdoMet_synt_C"/>
    <property type="match status" value="1"/>
</dbReference>
<dbReference type="Pfam" id="PF02772">
    <property type="entry name" value="S-AdoMet_synt_M"/>
    <property type="match status" value="1"/>
</dbReference>
<dbReference type="Pfam" id="PF00438">
    <property type="entry name" value="S-AdoMet_synt_N"/>
    <property type="match status" value="1"/>
</dbReference>
<dbReference type="PIRSF" id="PIRSF000497">
    <property type="entry name" value="MAT"/>
    <property type="match status" value="1"/>
</dbReference>
<dbReference type="SUPFAM" id="SSF55973">
    <property type="entry name" value="S-adenosylmethionine synthetase"/>
    <property type="match status" value="3"/>
</dbReference>
<dbReference type="PROSITE" id="PS00376">
    <property type="entry name" value="ADOMET_SYNTHASE_1"/>
    <property type="match status" value="1"/>
</dbReference>
<dbReference type="PROSITE" id="PS00377">
    <property type="entry name" value="ADOMET_SYNTHASE_2"/>
    <property type="match status" value="1"/>
</dbReference>
<sequence>MSERKLFTSESVSEGHPDKIADQISDAILDAILAEDPEAHVAAETCVYTGSVHVFGEISTTAYIDINRVVRDTIAEIGYTEAEYGFSAESVGVHPSLVEQSGDIAQGVNEALESREGDTDDLSHIGAGDQGLMFGFAINETPELMPLPISLSHQLVRRLAELRKSGEISYLRPDAKSQVTVEYDEHDKPVRVDTVVISTQHDPEATNDQIRQDVIEKVIKAVIPADYLDDDTKFFINPTGRFVIGGPQGDSGLTGRKIIVDTYGGYSRHGGGAFSGKDATKVDRSASYAARYIAKNLVAAGLATKAEVQLAYAIGVAQPVSVRVDTFGTSTVPEAVLEAAVRQVFDLRPAGIIQMLDLKRPIYKQTAAYGHMGRTDIDLPWERLNKVDALVEAVKTVL</sequence>
<accession>Q1JL80</accession>
<proteinExistence type="inferred from homology"/>
<feature type="chain" id="PRO_0000302988" description="S-adenosylmethionine synthase">
    <location>
        <begin position="1"/>
        <end position="398"/>
    </location>
</feature>
<feature type="region of interest" description="Flexible loop" evidence="1">
    <location>
        <begin position="100"/>
        <end position="110"/>
    </location>
</feature>
<feature type="binding site" description="in other chain" evidence="1">
    <location>
        <position position="16"/>
    </location>
    <ligand>
        <name>ATP</name>
        <dbReference type="ChEBI" id="CHEBI:30616"/>
        <note>ligand shared between two neighboring subunits</note>
    </ligand>
</feature>
<feature type="binding site" evidence="1">
    <location>
        <position position="18"/>
    </location>
    <ligand>
        <name>Mg(2+)</name>
        <dbReference type="ChEBI" id="CHEBI:18420"/>
    </ligand>
</feature>
<feature type="binding site" evidence="1">
    <location>
        <position position="44"/>
    </location>
    <ligand>
        <name>K(+)</name>
        <dbReference type="ChEBI" id="CHEBI:29103"/>
    </ligand>
</feature>
<feature type="binding site" description="in other chain" evidence="1">
    <location>
        <position position="57"/>
    </location>
    <ligand>
        <name>L-methionine</name>
        <dbReference type="ChEBI" id="CHEBI:57844"/>
        <note>ligand shared between two neighboring subunits</note>
    </ligand>
</feature>
<feature type="binding site" description="in other chain" evidence="1">
    <location>
        <position position="100"/>
    </location>
    <ligand>
        <name>L-methionine</name>
        <dbReference type="ChEBI" id="CHEBI:57844"/>
        <note>ligand shared between two neighboring subunits</note>
    </ligand>
</feature>
<feature type="binding site" description="in other chain" evidence="1">
    <location>
        <begin position="174"/>
        <end position="176"/>
    </location>
    <ligand>
        <name>ATP</name>
        <dbReference type="ChEBI" id="CHEBI:30616"/>
        <note>ligand shared between two neighboring subunits</note>
    </ligand>
</feature>
<feature type="binding site" description="in other chain" evidence="1">
    <location>
        <begin position="241"/>
        <end position="242"/>
    </location>
    <ligand>
        <name>ATP</name>
        <dbReference type="ChEBI" id="CHEBI:30616"/>
        <note>ligand shared between two neighboring subunits</note>
    </ligand>
</feature>
<feature type="binding site" evidence="1">
    <location>
        <position position="250"/>
    </location>
    <ligand>
        <name>ATP</name>
        <dbReference type="ChEBI" id="CHEBI:30616"/>
        <note>ligand shared between two neighboring subunits</note>
    </ligand>
</feature>
<feature type="binding site" evidence="1">
    <location>
        <position position="250"/>
    </location>
    <ligand>
        <name>L-methionine</name>
        <dbReference type="ChEBI" id="CHEBI:57844"/>
        <note>ligand shared between two neighboring subunits</note>
    </ligand>
</feature>
<feature type="binding site" description="in other chain" evidence="1">
    <location>
        <begin position="256"/>
        <end position="257"/>
    </location>
    <ligand>
        <name>ATP</name>
        <dbReference type="ChEBI" id="CHEBI:30616"/>
        <note>ligand shared between two neighboring subunits</note>
    </ligand>
</feature>
<feature type="binding site" evidence="1">
    <location>
        <position position="273"/>
    </location>
    <ligand>
        <name>ATP</name>
        <dbReference type="ChEBI" id="CHEBI:30616"/>
        <note>ligand shared between two neighboring subunits</note>
    </ligand>
</feature>
<feature type="binding site" evidence="1">
    <location>
        <position position="277"/>
    </location>
    <ligand>
        <name>ATP</name>
        <dbReference type="ChEBI" id="CHEBI:30616"/>
        <note>ligand shared between two neighboring subunits</note>
    </ligand>
</feature>
<feature type="binding site" description="in other chain" evidence="1">
    <location>
        <position position="281"/>
    </location>
    <ligand>
        <name>L-methionine</name>
        <dbReference type="ChEBI" id="CHEBI:57844"/>
        <note>ligand shared between two neighboring subunits</note>
    </ligand>
</feature>
<gene>
    <name evidence="1" type="primary">metK</name>
    <name type="ordered locus">MGAS9429_Spy1152</name>
</gene>
<name>METK_STRPC</name>
<evidence type="ECO:0000255" key="1">
    <source>
        <dbReference type="HAMAP-Rule" id="MF_00086"/>
    </source>
</evidence>
<reference key="1">
    <citation type="journal article" date="2006" name="Proc. Natl. Acad. Sci. U.S.A.">
        <title>Molecular genetic anatomy of inter- and intraserotype variation in the human bacterial pathogen group A Streptococcus.</title>
        <authorList>
            <person name="Beres S.B."/>
            <person name="Richter E.W."/>
            <person name="Nagiec M.J."/>
            <person name="Sumby P."/>
            <person name="Porcella S.F."/>
            <person name="DeLeo F.R."/>
            <person name="Musser J.M."/>
        </authorList>
    </citation>
    <scope>NUCLEOTIDE SEQUENCE [LARGE SCALE GENOMIC DNA]</scope>
    <source>
        <strain>MGAS9429</strain>
    </source>
</reference>
<keyword id="KW-0067">ATP-binding</keyword>
<keyword id="KW-0963">Cytoplasm</keyword>
<keyword id="KW-0460">Magnesium</keyword>
<keyword id="KW-0479">Metal-binding</keyword>
<keyword id="KW-0547">Nucleotide-binding</keyword>
<keyword id="KW-0554">One-carbon metabolism</keyword>
<keyword id="KW-0630">Potassium</keyword>
<keyword id="KW-0808">Transferase</keyword>
<comment type="function">
    <text evidence="1">Catalyzes the formation of S-adenosylmethionine (AdoMet) from methionine and ATP. The overall synthetic reaction is composed of two sequential steps, AdoMet formation and the subsequent tripolyphosphate hydrolysis which occurs prior to release of AdoMet from the enzyme.</text>
</comment>
<comment type="catalytic activity">
    <reaction evidence="1">
        <text>L-methionine + ATP + H2O = S-adenosyl-L-methionine + phosphate + diphosphate</text>
        <dbReference type="Rhea" id="RHEA:21080"/>
        <dbReference type="ChEBI" id="CHEBI:15377"/>
        <dbReference type="ChEBI" id="CHEBI:30616"/>
        <dbReference type="ChEBI" id="CHEBI:33019"/>
        <dbReference type="ChEBI" id="CHEBI:43474"/>
        <dbReference type="ChEBI" id="CHEBI:57844"/>
        <dbReference type="ChEBI" id="CHEBI:59789"/>
        <dbReference type="EC" id="2.5.1.6"/>
    </reaction>
</comment>
<comment type="cofactor">
    <cofactor evidence="1">
        <name>Mg(2+)</name>
        <dbReference type="ChEBI" id="CHEBI:18420"/>
    </cofactor>
    <text evidence="1">Binds 2 divalent ions per subunit.</text>
</comment>
<comment type="cofactor">
    <cofactor evidence="1">
        <name>K(+)</name>
        <dbReference type="ChEBI" id="CHEBI:29103"/>
    </cofactor>
    <text evidence="1">Binds 1 potassium ion per subunit.</text>
</comment>
<comment type="pathway">
    <text evidence="1">Amino-acid biosynthesis; S-adenosyl-L-methionine biosynthesis; S-adenosyl-L-methionine from L-methionine: step 1/1.</text>
</comment>
<comment type="subunit">
    <text evidence="1">Homotetramer; dimer of dimers.</text>
</comment>
<comment type="subcellular location">
    <subcellularLocation>
        <location evidence="1">Cytoplasm</location>
    </subcellularLocation>
</comment>
<comment type="similarity">
    <text evidence="1">Belongs to the AdoMet synthase family.</text>
</comment>